<comment type="function">
    <text evidence="1">Major structure protein of the hrp pilus, which is a component of the type III secretion system (T3SS, Hrp secretion system) required for effector protein delivery, parasitism, and pathogenicity. The hrp pilus functions as a conduit for protein delivery into the host cell (By similarity).</text>
</comment>
<comment type="subcellular location">
    <subcellularLocation>
        <location evidence="1">Secreted</location>
    </subcellularLocation>
    <subcellularLocation>
        <location evidence="1">Fimbrium</location>
    </subcellularLocation>
    <text evidence="1">Extracellular and secreted via type III secretion system.</text>
</comment>
<comment type="similarity">
    <text evidence="2">Belongs to the HrpA type 2 family.</text>
</comment>
<comment type="sequence caution" evidence="2">
    <conflict type="erroneous initiation">
        <sequence resource="EMBL-CDS" id="AAG01456"/>
    </conflict>
    <text>Extended N-terminus.</text>
</comment>
<sequence>MGLGGPLSSATSFASKTLEGAMSDSMAESAVAQAAKMKIDTQNSILDGKMDSATKEINSGHNAAKAIQF</sequence>
<keyword id="KW-0281">Fimbrium</keyword>
<keyword id="KW-0964">Secreted</keyword>
<keyword id="KW-0843">Virulence</keyword>
<organism>
    <name type="scientific">Pantoea stewartii subsp. stewartii</name>
    <name type="common">Erwinia stewartii</name>
    <dbReference type="NCBI Taxonomy" id="66271"/>
    <lineage>
        <taxon>Bacteria</taxon>
        <taxon>Pseudomonadati</taxon>
        <taxon>Pseudomonadota</taxon>
        <taxon>Gammaproteobacteria</taxon>
        <taxon>Enterobacterales</taxon>
        <taxon>Erwiniaceae</taxon>
        <taxon>Pantoea</taxon>
    </lineage>
</organism>
<reference key="1">
    <citation type="journal article" date="2001" name="Mol. Plant Microbe Interact.">
        <title>Genetic organization of the Pantoea stewartii subsp. stewartii hrp gene cluster and sequence analysis of the hrpA, hrpC, hrpN, and wtsE operons.</title>
        <authorList>
            <person name="Frederick R.D."/>
            <person name="Ahmad M."/>
            <person name="Majerczak D.R."/>
            <person name="Arroyo-Rodriguez A.S."/>
            <person name="Manulis S."/>
            <person name="Coplin D.L."/>
        </authorList>
    </citation>
    <scope>NUCLEOTIDE SEQUENCE [GENOMIC DNA]</scope>
    <source>
        <strain>SS104</strain>
    </source>
</reference>
<evidence type="ECO:0000250" key="1"/>
<evidence type="ECO:0000305" key="2"/>
<name>HRPA_PANSE</name>
<dbReference type="EMBL" id="AF282857">
    <property type="protein sequence ID" value="AAG01456.1"/>
    <property type="status" value="ALT_INIT"/>
    <property type="molecule type" value="Genomic_DNA"/>
</dbReference>
<dbReference type="RefSeq" id="WP_044243132.1">
    <property type="nucleotide sequence ID" value="NZ_JANUQT010000016.1"/>
</dbReference>
<dbReference type="GO" id="GO:0005576">
    <property type="term" value="C:extracellular region"/>
    <property type="evidence" value="ECO:0007669"/>
    <property type="project" value="UniProtKB-SubCell"/>
</dbReference>
<dbReference type="GO" id="GO:0009289">
    <property type="term" value="C:pilus"/>
    <property type="evidence" value="ECO:0007669"/>
    <property type="project" value="UniProtKB-SubCell"/>
</dbReference>
<feature type="chain" id="PRO_0000226255" description="Hrp pili protein HrpA">
    <location>
        <begin position="1"/>
        <end position="69"/>
    </location>
</feature>
<gene>
    <name type="primary">hrpA</name>
</gene>
<proteinExistence type="inferred from homology"/>
<protein>
    <recommendedName>
        <fullName>Hrp pili protein HrpA</fullName>
    </recommendedName>
    <alternativeName>
        <fullName>T3SS pilin HrpA</fullName>
    </alternativeName>
</protein>
<accession>Q9FCZ8</accession>